<reference key="1">
    <citation type="journal article" date="1991" name="Biochem. Biophys. Res. Commun.">
        <title>Molecular cloning and nucleotide sequence of complementary DNA encoding rabbit alpha 1-acid glycoprotein.</title>
        <authorList>
            <person name="Ray B.K."/>
            <person name="Ray A."/>
        </authorList>
    </citation>
    <scope>NUCLEOTIDE SEQUENCE [MRNA]</scope>
    <source>
        <tissue>Liver</tissue>
    </source>
</reference>
<reference key="2">
    <citation type="journal article" date="1992" name="Biochem. Biophys. Res. Commun.">
        <title>Cloning and structural characterization of a rabbit genomic DNA for alpha 1 acid glycoprotein.</title>
        <authorList>
            <person name="Ray B.K."/>
            <person name="Ray A."/>
        </authorList>
    </citation>
    <scope>NUCLEOTIDE SEQUENCE [GENOMIC DNA]</scope>
</reference>
<feature type="signal peptide" evidence="1">
    <location>
        <begin position="1"/>
        <end position="18"/>
    </location>
</feature>
<feature type="chain" id="PRO_0000017867" description="Alpha-1-acid glycoprotein">
    <location>
        <begin position="19"/>
        <end position="201"/>
    </location>
</feature>
<feature type="glycosylation site" description="N-linked (GlcNAc...) asparagine" evidence="2">
    <location>
        <position position="25"/>
    </location>
</feature>
<feature type="glycosylation site" description="N-linked (GlcNAc...) asparagine" evidence="2">
    <location>
        <position position="33"/>
    </location>
</feature>
<feature type="glycosylation site" description="N-linked (GlcNAc...) asparagine" evidence="2">
    <location>
        <position position="87"/>
    </location>
</feature>
<feature type="glycosylation site" description="N-linked (GlcNAc...) asparagine" evidence="2">
    <location>
        <position position="93"/>
    </location>
</feature>
<feature type="glycosylation site" description="N-linked (GlcNAc...) asparagine" evidence="2">
    <location>
        <position position="103"/>
    </location>
</feature>
<feature type="glycosylation site" description="N-linked (GlcNAc...) asparagine" evidence="2">
    <location>
        <position position="169"/>
    </location>
</feature>
<feature type="disulfide bond" evidence="1">
    <location>
        <begin position="90"/>
        <end position="183"/>
    </location>
</feature>
<name>A1AG_RABIT</name>
<organism>
    <name type="scientific">Oryctolagus cuniculus</name>
    <name type="common">Rabbit</name>
    <dbReference type="NCBI Taxonomy" id="9986"/>
    <lineage>
        <taxon>Eukaryota</taxon>
        <taxon>Metazoa</taxon>
        <taxon>Chordata</taxon>
        <taxon>Craniata</taxon>
        <taxon>Vertebrata</taxon>
        <taxon>Euteleostomi</taxon>
        <taxon>Mammalia</taxon>
        <taxon>Eutheria</taxon>
        <taxon>Euarchontoglires</taxon>
        <taxon>Glires</taxon>
        <taxon>Lagomorpha</taxon>
        <taxon>Leporidae</taxon>
        <taxon>Oryctolagus</taxon>
    </lineage>
</organism>
<evidence type="ECO:0000250" key="1"/>
<evidence type="ECO:0000255" key="2"/>
<evidence type="ECO:0000305" key="3"/>
<comment type="function">
    <text evidence="1">Functions as a transport protein in the blood stream. Binds various ligands in the interior of its beta-barrel domain (By similarity). Appears to function in modulating the activity of the immune system during the acute-phase reaction.</text>
</comment>
<comment type="subcellular location">
    <subcellularLocation>
        <location evidence="1">Secreted</location>
    </subcellularLocation>
</comment>
<comment type="domain">
    <text evidence="1">Contains a beta-barrel that binds various ligands in its interior.</text>
</comment>
<comment type="similarity">
    <text evidence="3">Belongs to the calycin superfamily. Lipocalin family.</text>
</comment>
<protein>
    <recommendedName>
        <fullName>Alpha-1-acid glycoprotein</fullName>
    </recommendedName>
    <alternativeName>
        <fullName>Orosomucoid</fullName>
        <shortName>OMD</shortName>
    </alternativeName>
</protein>
<proteinExistence type="evidence at transcript level"/>
<gene>
    <name type="primary">ORM1</name>
</gene>
<accession>P25227</accession>
<dbReference type="EMBL" id="X58727">
    <property type="protein sequence ID" value="CAA41559.1"/>
    <property type="molecule type" value="mRNA"/>
</dbReference>
<dbReference type="EMBL" id="M93344">
    <property type="status" value="NOT_ANNOTATED_CDS"/>
    <property type="molecule type" value="Genomic_DNA"/>
</dbReference>
<dbReference type="PIR" id="JH0617">
    <property type="entry name" value="JH0617"/>
</dbReference>
<dbReference type="RefSeq" id="NP_001095165.1">
    <property type="nucleotide sequence ID" value="NM_001101695.1"/>
</dbReference>
<dbReference type="SMR" id="P25227"/>
<dbReference type="FunCoup" id="P25227">
    <property type="interactions" value="205"/>
</dbReference>
<dbReference type="STRING" id="9986.ENSOCUP00000003988"/>
<dbReference type="GlyCosmos" id="P25227">
    <property type="glycosylation" value="6 sites, No reported glycans"/>
</dbReference>
<dbReference type="PaxDb" id="9986-ENSOCUP00000003988"/>
<dbReference type="GeneID" id="100009268"/>
<dbReference type="KEGG" id="ocu:100009268"/>
<dbReference type="CTD" id="5004"/>
<dbReference type="eggNOG" id="ENOG502S0Q2">
    <property type="taxonomic scope" value="Eukaryota"/>
</dbReference>
<dbReference type="HOGENOM" id="CLU_117688_0_0_1"/>
<dbReference type="InParanoid" id="P25227"/>
<dbReference type="OMA" id="KTFMLAF"/>
<dbReference type="OrthoDB" id="9448848at2759"/>
<dbReference type="TreeFam" id="TF343791"/>
<dbReference type="Proteomes" id="UP000001811">
    <property type="component" value="Unplaced"/>
</dbReference>
<dbReference type="GO" id="GO:0005615">
    <property type="term" value="C:extracellular space"/>
    <property type="evidence" value="ECO:0007669"/>
    <property type="project" value="InterPro"/>
</dbReference>
<dbReference type="GO" id="GO:0006953">
    <property type="term" value="P:acute-phase response"/>
    <property type="evidence" value="ECO:0007669"/>
    <property type="project" value="UniProtKB-KW"/>
</dbReference>
<dbReference type="GO" id="GO:0002682">
    <property type="term" value="P:regulation of immune system process"/>
    <property type="evidence" value="ECO:0007669"/>
    <property type="project" value="InterPro"/>
</dbReference>
<dbReference type="CDD" id="cd19451">
    <property type="entry name" value="lipocalin_AGP-like"/>
    <property type="match status" value="1"/>
</dbReference>
<dbReference type="FunFam" id="2.40.128.20:FF:000012">
    <property type="entry name" value="Alpha-1-acid glycoprotein 2"/>
    <property type="match status" value="1"/>
</dbReference>
<dbReference type="Gene3D" id="2.40.128.20">
    <property type="match status" value="1"/>
</dbReference>
<dbReference type="InterPro" id="IPR001500">
    <property type="entry name" value="A1A_glycop"/>
</dbReference>
<dbReference type="InterPro" id="IPR012674">
    <property type="entry name" value="Calycin"/>
</dbReference>
<dbReference type="InterPro" id="IPR000566">
    <property type="entry name" value="Lipocln_cytosolic_FA-bd_dom"/>
</dbReference>
<dbReference type="PANTHER" id="PTHR11967">
    <property type="entry name" value="ALPHA-1-ACID GLYCOPROTEIN"/>
    <property type="match status" value="1"/>
</dbReference>
<dbReference type="PANTHER" id="PTHR11967:SF2">
    <property type="entry name" value="ALPHA-1-ACID GLYCOPROTEIN 1"/>
    <property type="match status" value="1"/>
</dbReference>
<dbReference type="Pfam" id="PF00061">
    <property type="entry name" value="Lipocalin"/>
    <property type="match status" value="1"/>
</dbReference>
<dbReference type="PIRSF" id="PIRSF036899">
    <property type="entry name" value="AGP"/>
    <property type="match status" value="1"/>
</dbReference>
<dbReference type="PRINTS" id="PR00708">
    <property type="entry name" value="A1AGLPROTEIN"/>
</dbReference>
<dbReference type="SUPFAM" id="SSF50814">
    <property type="entry name" value="Lipocalins"/>
    <property type="match status" value="1"/>
</dbReference>
<sequence length="201" mass="23028">MALPWALAVLSLLPLLHAQDPACANFSTSPITNATLDQLSHKWFFTASAFRNPKYKQLVQHTQAAFFYFTAIKEEDTLLLREYITTNNTCFYNSSIVRVQRENGTLSKHDGIRNSVADLLLLRDPGSFLLVFFAGKEQDKGMSFYTDKPKASPEQLEEFYEALTCLGMNKTEVVYTDWTKDLCEPLEKQHEEERKKEKAES</sequence>
<keyword id="KW-0011">Acute phase</keyword>
<keyword id="KW-1015">Disulfide bond</keyword>
<keyword id="KW-0325">Glycoprotein</keyword>
<keyword id="KW-1185">Reference proteome</keyword>
<keyword id="KW-0964">Secreted</keyword>
<keyword id="KW-0732">Signal</keyword>
<keyword id="KW-0813">Transport</keyword>